<name>F16PC_STAAR</name>
<sequence>MTQITERELKKKYLDLLSQHFDTPEKLATEIINLESILELPKGTEHFVSDLHGEYEAFQHVLRNGSGNVRAKINDIFKDKLSTKELNDLTALVYYPEDKLQLIKCDFQNYGQLNVWYITTIEHLIQLIKYCSSKYTRSKLRRALPEQYVFIVEELLYKNNEFKNKKSYYETLVNQVIELKQADDLIIGLAYSVQRLVVDHLHVVGDIYDRGPQPDKIMDTLINYHSLDIQWGNHDVLWVGAYAGSKVCLANLLRICARYDNLDIVEDAYGINLRPLLTLAEKYYDADNPAFKPKKRPDKHERLTQREESQITKIHQAIAMIQFKLEIPVIKRRPNFEMDERLVLEKVNYDTNEITVYGKTYPLKDTCFQTVNRDNPAKLLPEEEEVMNKLLLSFQQSEKLRRHMSFLMRKGSLYLPCNGNLLIHGCIPVDENGEMESFEIDGQTYSGQELLDVFEYHVRKSFDEKENTDDLSTDLVWYLWTGKYSSLFGKRAMTTFERYFIADKASHKEEKNPYYHLREDVNMVRKMLSDFGLNPDEGRIINGHTPVKEINGEDPIKADGKMLVIDGGFSKAYQSTTGIAGYTLLYNSFGMQLVAHQQFNAKEKILSEGIDELSIKRIVDKELQRKKIRNTNKGKELQAQIDILKMLMHDRYLD</sequence>
<proteinExistence type="inferred from homology"/>
<reference key="1">
    <citation type="journal article" date="2004" name="Proc. Natl. Acad. Sci. U.S.A.">
        <title>Complete genomes of two clinical Staphylococcus aureus strains: evidence for the rapid evolution of virulence and drug resistance.</title>
        <authorList>
            <person name="Holden M.T.G."/>
            <person name="Feil E.J."/>
            <person name="Lindsay J.A."/>
            <person name="Peacock S.J."/>
            <person name="Day N.P.J."/>
            <person name="Enright M.C."/>
            <person name="Foster T.J."/>
            <person name="Moore C.E."/>
            <person name="Hurst L."/>
            <person name="Atkin R."/>
            <person name="Barron A."/>
            <person name="Bason N."/>
            <person name="Bentley S.D."/>
            <person name="Chillingworth C."/>
            <person name="Chillingworth T."/>
            <person name="Churcher C."/>
            <person name="Clark L."/>
            <person name="Corton C."/>
            <person name="Cronin A."/>
            <person name="Doggett J."/>
            <person name="Dowd L."/>
            <person name="Feltwell T."/>
            <person name="Hance Z."/>
            <person name="Harris B."/>
            <person name="Hauser H."/>
            <person name="Holroyd S."/>
            <person name="Jagels K."/>
            <person name="James K.D."/>
            <person name="Lennard N."/>
            <person name="Line A."/>
            <person name="Mayes R."/>
            <person name="Moule S."/>
            <person name="Mungall K."/>
            <person name="Ormond D."/>
            <person name="Quail M.A."/>
            <person name="Rabbinowitsch E."/>
            <person name="Rutherford K.M."/>
            <person name="Sanders M."/>
            <person name="Sharp S."/>
            <person name="Simmonds M."/>
            <person name="Stevens K."/>
            <person name="Whitehead S."/>
            <person name="Barrell B.G."/>
            <person name="Spratt B.G."/>
            <person name="Parkhill J."/>
        </authorList>
    </citation>
    <scope>NUCLEOTIDE SEQUENCE [LARGE SCALE GENOMIC DNA]</scope>
    <source>
        <strain>MRSA252</strain>
    </source>
</reference>
<keyword id="KW-0119">Carbohydrate metabolism</keyword>
<keyword id="KW-0378">Hydrolase</keyword>
<keyword id="KW-0464">Manganese</keyword>
<organism>
    <name type="scientific">Staphylococcus aureus (strain MRSA252)</name>
    <dbReference type="NCBI Taxonomy" id="282458"/>
    <lineage>
        <taxon>Bacteria</taxon>
        <taxon>Bacillati</taxon>
        <taxon>Bacillota</taxon>
        <taxon>Bacilli</taxon>
        <taxon>Bacillales</taxon>
        <taxon>Staphylococcaceae</taxon>
        <taxon>Staphylococcus</taxon>
    </lineage>
</organism>
<evidence type="ECO:0000255" key="1">
    <source>
        <dbReference type="HAMAP-Rule" id="MF_01854"/>
    </source>
</evidence>
<evidence type="ECO:0000256" key="2">
    <source>
        <dbReference type="SAM" id="MobiDB-lite"/>
    </source>
</evidence>
<feature type="chain" id="PRO_0000359986" description="Fructose-1,6-bisphosphatase class 3">
    <location>
        <begin position="1"/>
        <end position="654"/>
    </location>
</feature>
<feature type="region of interest" description="Disordered" evidence="2">
    <location>
        <begin position="288"/>
        <end position="307"/>
    </location>
</feature>
<feature type="compositionally biased region" description="Basic and acidic residues" evidence="2">
    <location>
        <begin position="298"/>
        <end position="307"/>
    </location>
</feature>
<comment type="catalytic activity">
    <reaction evidence="1">
        <text>beta-D-fructose 1,6-bisphosphate + H2O = beta-D-fructose 6-phosphate + phosphate</text>
        <dbReference type="Rhea" id="RHEA:11064"/>
        <dbReference type="ChEBI" id="CHEBI:15377"/>
        <dbReference type="ChEBI" id="CHEBI:32966"/>
        <dbReference type="ChEBI" id="CHEBI:43474"/>
        <dbReference type="ChEBI" id="CHEBI:57634"/>
        <dbReference type="EC" id="3.1.3.11"/>
    </reaction>
</comment>
<comment type="cofactor">
    <cofactor evidence="1">
        <name>Mn(2+)</name>
        <dbReference type="ChEBI" id="CHEBI:29035"/>
    </cofactor>
</comment>
<comment type="pathway">
    <text evidence="1">Carbohydrate biosynthesis; gluconeogenesis.</text>
</comment>
<comment type="similarity">
    <text evidence="1">Belongs to the FBPase class 3 family.</text>
</comment>
<dbReference type="EC" id="3.1.3.11" evidence="1"/>
<dbReference type="EMBL" id="BX571856">
    <property type="protein sequence ID" value="CAG41576.1"/>
    <property type="molecule type" value="Genomic_DNA"/>
</dbReference>
<dbReference type="RefSeq" id="WP_000192183.1">
    <property type="nucleotide sequence ID" value="NC_002952.2"/>
</dbReference>
<dbReference type="KEGG" id="sar:SAR2596"/>
<dbReference type="HOGENOM" id="CLU_028392_2_0_9"/>
<dbReference type="UniPathway" id="UPA00138"/>
<dbReference type="Proteomes" id="UP000000596">
    <property type="component" value="Chromosome"/>
</dbReference>
<dbReference type="GO" id="GO:0042132">
    <property type="term" value="F:fructose 1,6-bisphosphate 1-phosphatase activity"/>
    <property type="evidence" value="ECO:0007669"/>
    <property type="project" value="UniProtKB-UniRule"/>
</dbReference>
<dbReference type="GO" id="GO:0006094">
    <property type="term" value="P:gluconeogenesis"/>
    <property type="evidence" value="ECO:0007669"/>
    <property type="project" value="UniProtKB-UniRule"/>
</dbReference>
<dbReference type="Gene3D" id="3.60.21.10">
    <property type="match status" value="1"/>
</dbReference>
<dbReference type="HAMAP" id="MF_01854">
    <property type="entry name" value="FBPase_class3"/>
    <property type="match status" value="1"/>
</dbReference>
<dbReference type="InterPro" id="IPR009164">
    <property type="entry name" value="FBPtase_class3"/>
</dbReference>
<dbReference type="InterPro" id="IPR029052">
    <property type="entry name" value="Metallo-depent_PP-like"/>
</dbReference>
<dbReference type="Pfam" id="PF06874">
    <property type="entry name" value="FBPase_2"/>
    <property type="match status" value="1"/>
</dbReference>
<dbReference type="PIRSF" id="PIRSF000906">
    <property type="entry name" value="FBPtase_Bacill"/>
    <property type="match status" value="1"/>
</dbReference>
<dbReference type="SUPFAM" id="SSF56300">
    <property type="entry name" value="Metallo-dependent phosphatases"/>
    <property type="match status" value="2"/>
</dbReference>
<gene>
    <name evidence="1" type="primary">fbp</name>
    <name type="ordered locus">SAR2596</name>
</gene>
<accession>Q6GDS9</accession>
<protein>
    <recommendedName>
        <fullName evidence="1">Fructose-1,6-bisphosphatase class 3</fullName>
        <shortName evidence="1">FBPase class 3</shortName>
        <ecNumber evidence="1">3.1.3.11</ecNumber>
    </recommendedName>
    <alternativeName>
        <fullName evidence="1">D-fructose-1,6-bisphosphate 1-phosphohydrolase class 3</fullName>
    </alternativeName>
</protein>